<feature type="chain" id="PRO_0000446893" description="Zinc transporter ttm-1">
    <location>
        <begin position="1"/>
        <end position="410"/>
    </location>
</feature>
<feature type="topological domain" description="Cytoplasmic" evidence="6">
    <location>
        <begin position="1"/>
        <end position="103"/>
    </location>
</feature>
<feature type="transmembrane region" description="Helical" evidence="1">
    <location>
        <begin position="104"/>
        <end position="124"/>
    </location>
</feature>
<feature type="topological domain" description="Extracellular" evidence="6">
    <location>
        <begin position="125"/>
        <end position="129"/>
    </location>
</feature>
<feature type="transmembrane region" description="Helical" evidence="1">
    <location>
        <begin position="130"/>
        <end position="150"/>
    </location>
</feature>
<feature type="topological domain" description="Cytoplasmic" evidence="6">
    <location>
        <begin position="151"/>
        <end position="171"/>
    </location>
</feature>
<feature type="transmembrane region" description="Helical" evidence="1">
    <location>
        <begin position="172"/>
        <end position="192"/>
    </location>
</feature>
<feature type="topological domain" description="Extracellular" evidence="6">
    <location>
        <begin position="193"/>
        <end position="208"/>
    </location>
</feature>
<feature type="transmembrane region" description="Helical" evidence="1">
    <location>
        <begin position="209"/>
        <end position="229"/>
    </location>
</feature>
<feature type="topological domain" description="Cytoplasmic" evidence="6">
    <location>
        <begin position="230"/>
        <end position="258"/>
    </location>
</feature>
<feature type="transmembrane region" description="Helical" evidence="1">
    <location>
        <begin position="259"/>
        <end position="279"/>
    </location>
</feature>
<feature type="topological domain" description="Extracellular" evidence="6">
    <location>
        <position position="280"/>
    </location>
</feature>
<feature type="transmembrane region" description="Helical" evidence="1">
    <location>
        <begin position="281"/>
        <end position="301"/>
    </location>
</feature>
<feature type="topological domain" description="Cytoplasmic" evidence="1">
    <location>
        <begin position="302"/>
        <end position="410"/>
    </location>
</feature>
<feature type="region of interest" description="Disordered" evidence="2">
    <location>
        <begin position="1"/>
        <end position="94"/>
    </location>
</feature>
<feature type="compositionally biased region" description="Low complexity" evidence="2">
    <location>
        <begin position="1"/>
        <end position="13"/>
    </location>
</feature>
<feature type="compositionally biased region" description="Low complexity" evidence="2">
    <location>
        <begin position="35"/>
        <end position="46"/>
    </location>
</feature>
<feature type="compositionally biased region" description="Basic residues" evidence="2">
    <location>
        <begin position="50"/>
        <end position="69"/>
    </location>
</feature>
<feature type="splice variant" id="VSP_060102" description="In isoform a." evidence="6">
    <original>MTISMISPSSIRLSSDKRDSSSSNLPANIEEDTQSVSSSDSGVSADSIDHHHHGHGHGHSHGGHGHSHTHNNDDSSSDCSGAGGGAHKHSHDEKYQK</original>
    <variation>MAEIDVSDRRGLVSDDENFAETFSTEEGDGEGGGGGDFVGRRSILTTHCHYWDENDDDMVARVERGGSTDSASSREDT</variation>
    <location>
        <begin position="1"/>
        <end position="97"/>
    </location>
</feature>
<feature type="splice variant" id="VSP_060103" description="In isoform c." evidence="6">
    <original>MTISMISPSSIRLSSDKRDSSSSNLPANIEEDTQSVSSSDSGVSADSIDHHHHGHGHGHSHGGHGHSHTHNNDDSSSDCSGAGGGAHKHSHDEKYQK</original>
    <variation>MVARVERGGSTDSASSREDT</variation>
    <location>
        <begin position="1"/>
        <end position="97"/>
    </location>
</feature>
<feature type="mutagenesis site" description="In ok3503; Impaired zinc excretion in response to increased levels of dietary zinc." evidence="4">
    <location>
        <begin position="145"/>
        <end position="360"/>
    </location>
</feature>
<dbReference type="EMBL" id="BX284603">
    <property type="protein sequence ID" value="CAA16327.1"/>
    <property type="molecule type" value="Genomic_DNA"/>
</dbReference>
<dbReference type="EMBL" id="BX284603">
    <property type="protein sequence ID" value="CAA16328.1"/>
    <property type="molecule type" value="Genomic_DNA"/>
</dbReference>
<dbReference type="EMBL" id="BX284603">
    <property type="protein sequence ID" value="CTQ86604.1"/>
    <property type="molecule type" value="Genomic_DNA"/>
</dbReference>
<dbReference type="PIR" id="T26756">
    <property type="entry name" value="T26756"/>
</dbReference>
<dbReference type="PIR" id="T26757">
    <property type="entry name" value="T26757"/>
</dbReference>
<dbReference type="RefSeq" id="NP_001299904.1">
    <molecule id="O45923-3"/>
    <property type="nucleotide sequence ID" value="NM_001312975.3"/>
</dbReference>
<dbReference type="RefSeq" id="NP_499691.1">
    <molecule id="O45923-2"/>
    <property type="nucleotide sequence ID" value="NM_067290.6"/>
</dbReference>
<dbReference type="RefSeq" id="NP_499692.1">
    <molecule id="O45923-1"/>
    <property type="nucleotide sequence ID" value="NM_067291.8"/>
</dbReference>
<dbReference type="SMR" id="O45923"/>
<dbReference type="DIP" id="DIP-25801N"/>
<dbReference type="FunCoup" id="O45923">
    <property type="interactions" value="117"/>
</dbReference>
<dbReference type="IntAct" id="O45923">
    <property type="interactions" value="4"/>
</dbReference>
<dbReference type="STRING" id="6239.Y39E4A.2b.1"/>
<dbReference type="TCDB" id="2.A.4.3.12">
    <property type="family name" value="the cation diffusion facilitator (cdf) family"/>
</dbReference>
<dbReference type="PaxDb" id="6239-Y39E4A.2b"/>
<dbReference type="EnsemblMetazoa" id="Y39E4A.2a.1">
    <molecule id="O45923-2"/>
    <property type="protein sequence ID" value="Y39E4A.2a.1"/>
    <property type="gene ID" value="WBGene00012712"/>
</dbReference>
<dbReference type="EnsemblMetazoa" id="Y39E4A.2b.1">
    <molecule id="O45923-1"/>
    <property type="protein sequence ID" value="Y39E4A.2b.1"/>
    <property type="gene ID" value="WBGene00012712"/>
</dbReference>
<dbReference type="EnsemblMetazoa" id="Y39E4A.2c.1">
    <molecule id="O45923-3"/>
    <property type="protein sequence ID" value="Y39E4A.2c.1"/>
    <property type="gene ID" value="WBGene00012712"/>
</dbReference>
<dbReference type="GeneID" id="176715"/>
<dbReference type="KEGG" id="cel:CELE_Y39E4A.2"/>
<dbReference type="UCSC" id="Y39E4A.2b">
    <property type="organism name" value="c. elegans"/>
</dbReference>
<dbReference type="AGR" id="WB:WBGene00012712"/>
<dbReference type="CTD" id="176715"/>
<dbReference type="WormBase" id="Y39E4A.2a">
    <molecule id="O45923-2"/>
    <property type="protein sequence ID" value="CE16616"/>
    <property type="gene ID" value="WBGene00012712"/>
    <property type="gene designation" value="ttm-1"/>
</dbReference>
<dbReference type="WormBase" id="Y39E4A.2b">
    <molecule id="O45923-1"/>
    <property type="protein sequence ID" value="CE16617"/>
    <property type="gene ID" value="WBGene00012712"/>
    <property type="gene designation" value="ttm-1"/>
</dbReference>
<dbReference type="WormBase" id="Y39E4A.2c">
    <molecule id="O45923-3"/>
    <property type="protein sequence ID" value="CE50587"/>
    <property type="gene ID" value="WBGene00012712"/>
    <property type="gene designation" value="ttm-1"/>
</dbReference>
<dbReference type="eggNOG" id="KOG1482">
    <property type="taxonomic scope" value="Eukaryota"/>
</dbReference>
<dbReference type="GeneTree" id="ENSGT00940000157545"/>
<dbReference type="HOGENOM" id="CLU_013430_0_1_1"/>
<dbReference type="InParanoid" id="O45923"/>
<dbReference type="OMA" id="NGLHTWS"/>
<dbReference type="OrthoDB" id="9944568at2759"/>
<dbReference type="PhylomeDB" id="O45923"/>
<dbReference type="PRO" id="PR:O45923"/>
<dbReference type="Proteomes" id="UP000001940">
    <property type="component" value="Chromosome III"/>
</dbReference>
<dbReference type="Bgee" id="WBGene00012712">
    <property type="expression patterns" value="Expressed in germ line (C elegans) and 4 other cell types or tissues"/>
</dbReference>
<dbReference type="GO" id="GO:0016324">
    <property type="term" value="C:apical plasma membrane"/>
    <property type="evidence" value="ECO:0007669"/>
    <property type="project" value="UniProtKB-SubCell"/>
</dbReference>
<dbReference type="GO" id="GO:0030659">
    <property type="term" value="C:cytoplasmic vesicle membrane"/>
    <property type="evidence" value="ECO:0007669"/>
    <property type="project" value="UniProtKB-SubCell"/>
</dbReference>
<dbReference type="GO" id="GO:0005886">
    <property type="term" value="C:plasma membrane"/>
    <property type="evidence" value="ECO:0000318"/>
    <property type="project" value="GO_Central"/>
</dbReference>
<dbReference type="GO" id="GO:0005385">
    <property type="term" value="F:zinc ion transmembrane transporter activity"/>
    <property type="evidence" value="ECO:0000318"/>
    <property type="project" value="GO_Central"/>
</dbReference>
<dbReference type="GO" id="GO:0046686">
    <property type="term" value="P:response to cadmium ion"/>
    <property type="evidence" value="ECO:0000315"/>
    <property type="project" value="UniProtKB"/>
</dbReference>
<dbReference type="GO" id="GO:0093002">
    <property type="term" value="P:response to nematicide"/>
    <property type="evidence" value="ECO:0000315"/>
    <property type="project" value="UniProtKB"/>
</dbReference>
<dbReference type="GO" id="GO:0010043">
    <property type="term" value="P:response to zinc ion"/>
    <property type="evidence" value="ECO:0000318"/>
    <property type="project" value="GO_Central"/>
</dbReference>
<dbReference type="GO" id="GO:0071577">
    <property type="term" value="P:zinc ion transmembrane transport"/>
    <property type="evidence" value="ECO:0000318"/>
    <property type="project" value="GO_Central"/>
</dbReference>
<dbReference type="FunFam" id="1.20.1510.10:FF:000027">
    <property type="entry name" value="Zinc transporter ttm-1"/>
    <property type="match status" value="1"/>
</dbReference>
<dbReference type="Gene3D" id="1.20.1510.10">
    <property type="entry name" value="Cation efflux protein transmembrane domain"/>
    <property type="match status" value="1"/>
</dbReference>
<dbReference type="InterPro" id="IPR002524">
    <property type="entry name" value="Cation_efflux"/>
</dbReference>
<dbReference type="InterPro" id="IPR036837">
    <property type="entry name" value="Cation_efflux_CTD_sf"/>
</dbReference>
<dbReference type="InterPro" id="IPR027469">
    <property type="entry name" value="Cation_efflux_TMD_sf"/>
</dbReference>
<dbReference type="InterPro" id="IPR050681">
    <property type="entry name" value="CDF/SLC30A"/>
</dbReference>
<dbReference type="NCBIfam" id="TIGR01297">
    <property type="entry name" value="CDF"/>
    <property type="match status" value="1"/>
</dbReference>
<dbReference type="PANTHER" id="PTHR11562">
    <property type="entry name" value="CATION EFFLUX PROTEIN/ ZINC TRANSPORTER"/>
    <property type="match status" value="1"/>
</dbReference>
<dbReference type="PANTHER" id="PTHR11562:SF84">
    <property type="entry name" value="LD05335P"/>
    <property type="match status" value="1"/>
</dbReference>
<dbReference type="Pfam" id="PF01545">
    <property type="entry name" value="Cation_efflux"/>
    <property type="match status" value="1"/>
</dbReference>
<dbReference type="SUPFAM" id="SSF160240">
    <property type="entry name" value="Cation efflux protein cytoplasmic domain-like"/>
    <property type="match status" value="1"/>
</dbReference>
<dbReference type="SUPFAM" id="SSF161111">
    <property type="entry name" value="Cation efflux protein transmembrane domain-like"/>
    <property type="match status" value="1"/>
</dbReference>
<proteinExistence type="evidence at protein level"/>
<keyword id="KW-0025">Alternative splicing</keyword>
<keyword id="KW-1003">Cell membrane</keyword>
<keyword id="KW-0968">Cytoplasmic vesicle</keyword>
<keyword id="KW-0406">Ion transport</keyword>
<keyword id="KW-0472">Membrane</keyword>
<keyword id="KW-1185">Reference proteome</keyword>
<keyword id="KW-0812">Transmembrane</keyword>
<keyword id="KW-1133">Transmembrane helix</keyword>
<keyword id="KW-0813">Transport</keyword>
<keyword id="KW-0862">Zinc</keyword>
<keyword id="KW-0864">Zinc transport</keyword>
<name>TTM1_CAEEL</name>
<comment type="function">
    <text evidence="3 4">Promotes excretion of zinc from intestinal cells into the intestinal lumen in response to increased dietary zinc (PubMed:23717214). Involved in cadmium resistance, possibly by promoting its transport from cells (PubMed:15256590). Involved in resistance to B.thuringiensis pore-forming toxin Cry5B downstream of the sek-1 and pmk-1 MAPK kinase pathway (PubMed:15256590).</text>
</comment>
<comment type="subcellular location">
    <molecule>Isoform a</molecule>
    <subcellularLocation>
        <location evidence="4">Cytoplasmic vesicle membrane</location>
        <topology evidence="1">Multi-pass membrane protein</topology>
    </subcellularLocation>
</comment>
<comment type="subcellular location">
    <molecule>Isoform b</molecule>
    <subcellularLocation>
        <location evidence="4">Apical cell membrane</location>
        <topology evidence="1">Multi-pass membrane protein</topology>
    </subcellularLocation>
    <subcellularLocation>
        <location evidence="4">Cytoplasmic vesicle membrane</location>
        <topology evidence="1">Multi-pass membrane protein</topology>
    </subcellularLocation>
</comment>
<comment type="alternative products">
    <event type="alternative splicing"/>
    <isoform>
        <id>O45923-1</id>
        <name evidence="9">b</name>
        <sequence type="displayed"/>
    </isoform>
    <isoform>
        <id>O45923-2</id>
        <name evidence="8">a</name>
        <sequence type="described" ref="VSP_060102"/>
    </isoform>
    <isoform>
        <id>O45923-3</id>
        <name evidence="10">c</name>
        <sequence type="described" ref="VSP_060103"/>
    </isoform>
</comment>
<comment type="tissue specificity">
    <text evidence="4">Isoform a: Expressed in the hypodermis and the intestine. Isoform b: Expressed in the intestine, head neurons, seam cells, hypodermis, and the vulva.</text>
</comment>
<comment type="induction">
    <text evidence="3 4">By B.thuringiensis pore-forming toxin Cry5B (PubMed:15256590). Isoform a: Not induced by zinc. Isoform b: Induced by zinc specifically in intestinal cells (PubMed:23717214).</text>
</comment>
<comment type="disruption phenotype">
    <text evidence="3">RNAi-mediated knockdown causes hypersensitivity to low, chronic doses of the B.thuringiensis pore-forming toxin Cry5B and heavy metal Cd(2+) exposure.</text>
</comment>
<comment type="similarity">
    <text evidence="6">Belongs to the cation diffusion facilitator (CDF) transporter (TC 2.A.4) family. SLC30A subfamily.</text>
</comment>
<evidence type="ECO:0000255" key="1"/>
<evidence type="ECO:0000256" key="2">
    <source>
        <dbReference type="SAM" id="MobiDB-lite"/>
    </source>
</evidence>
<evidence type="ECO:0000269" key="3">
    <source>
    </source>
</evidence>
<evidence type="ECO:0000269" key="4">
    <source>
    </source>
</evidence>
<evidence type="ECO:0000303" key="5">
    <source>
    </source>
</evidence>
<evidence type="ECO:0000305" key="6"/>
<evidence type="ECO:0000312" key="7">
    <source>
        <dbReference type="Proteomes" id="UP000001940"/>
    </source>
</evidence>
<evidence type="ECO:0000312" key="8">
    <source>
        <dbReference type="WormBase" id="Y39E4A.2a"/>
    </source>
</evidence>
<evidence type="ECO:0000312" key="9">
    <source>
        <dbReference type="WormBase" id="Y39E4A.2b"/>
    </source>
</evidence>
<evidence type="ECO:0000312" key="10">
    <source>
        <dbReference type="WormBase" id="Y39E4A.2c"/>
    </source>
</evidence>
<organism evidence="7">
    <name type="scientific">Caenorhabditis elegans</name>
    <dbReference type="NCBI Taxonomy" id="6239"/>
    <lineage>
        <taxon>Eukaryota</taxon>
        <taxon>Metazoa</taxon>
        <taxon>Ecdysozoa</taxon>
        <taxon>Nematoda</taxon>
        <taxon>Chromadorea</taxon>
        <taxon>Rhabditida</taxon>
        <taxon>Rhabditina</taxon>
        <taxon>Rhabditomorpha</taxon>
        <taxon>Rhabditoidea</taxon>
        <taxon>Rhabditidae</taxon>
        <taxon>Peloderinae</taxon>
        <taxon>Caenorhabditis</taxon>
    </lineage>
</organism>
<accession>O45923</accession>
<accession>A0A0K3AU82</accession>
<accession>O45922</accession>
<gene>
    <name evidence="9" type="primary">ttm-1</name>
    <name evidence="9" type="ORF">Y39E4A.2</name>
</gene>
<protein>
    <recommendedName>
        <fullName evidence="6">Zinc transporter ttm-1</fullName>
    </recommendedName>
    <alternativeName>
        <fullName evidence="9">Toxin-regulated target of MAPK 1</fullName>
    </alternativeName>
    <alternativeName>
        <fullName evidence="5">Toxin-regulated target of p38MAPK</fullName>
    </alternativeName>
</protein>
<sequence length="410" mass="44082">MTISMISPSSIRLSSDKRDSSSSNLPANIEEDTQSVSSSDSGVSADSIDHHHHGHGHGHSHGGHGHSHTHNNDDSSSDCSGAGGGAHKHSHDEKYQKGRRAEKVLWAVAALSAVFIAAEFVGGFWAQSLAIMTDAGHMLSDLLSFIISIFAIRCARLPASKRLSFGYERAEVLGALTSVIILWVLTTVLVVVAIQRIVNNEHEVDADVMLITAGVGVLFNIVMGLVLHFGTGGHGHTHGGHSSHGHAHDGKNVNVRAALIHVIGDLVQSIGVLIAALIIRFTGWTLADPICTFLFSIIVLFTTVTVMRDIFFVLMEATPSHYDLSDVKKALSALEGVKGVHDLHLWSIGMDKTAFSVHLALESPNRAMENVAEARSLIRRRFGVAVATVQVEPFDEKIDSCDTCQQQETA</sequence>
<reference evidence="7" key="1">
    <citation type="journal article" date="1998" name="Science">
        <title>Genome sequence of the nematode C. elegans: a platform for investigating biology.</title>
        <authorList>
            <consortium name="The C. elegans sequencing consortium"/>
        </authorList>
    </citation>
    <scope>NUCLEOTIDE SEQUENCE [LARGE SCALE GENOMIC DNA]</scope>
    <source>
        <strain evidence="7">Bristol N2</strain>
    </source>
</reference>
<reference evidence="6" key="2">
    <citation type="journal article" date="2004" name="Proc. Natl. Acad. Sci. U.S.A.">
        <title>Mitogen-activated protein kinase pathways defend against bacterial pore-forming toxins.</title>
        <authorList>
            <person name="Huffman D.L."/>
            <person name="Abrami L."/>
            <person name="Sasik R."/>
            <person name="Corbeil J."/>
            <person name="van der Goot F.G."/>
            <person name="Aroian R.V."/>
        </authorList>
    </citation>
    <scope>FUNCTION</scope>
    <scope>INDUCTION</scope>
    <scope>DISRUPTION PHENOTYPE</scope>
</reference>
<reference evidence="6" key="3">
    <citation type="journal article" date="2013" name="PLoS Genet.">
        <title>ttm-1 encodes CDF transporters that excrete zinc from intestinal cells of C. elegans and act in a parallel negative feedback circuit that promotes homeostasis.</title>
        <authorList>
            <person name="Roh H.C."/>
            <person name="Collier S."/>
            <person name="Deshmukh K."/>
            <person name="Guthrie J."/>
            <person name="Robertson J.D."/>
            <person name="Kornfeld K."/>
        </authorList>
    </citation>
    <scope>FUNCTION</scope>
    <scope>SUBCELLULAR LOCATION</scope>
    <scope>TISSUE SPECIFICITY</scope>
    <scope>INDUCTION</scope>
    <scope>MUTAGENESIS OF 145-PHE--ALA-360</scope>
</reference>